<accession>P51612</accession>
<accession>P54732</accession>
<accession>Q3TKI2</accession>
<accession>Q920M1</accession>
<accession>Q9DBW7</accession>
<evidence type="ECO:0000250" key="1"/>
<evidence type="ECO:0000250" key="2">
    <source>
        <dbReference type="UniProtKB" id="Q01831"/>
    </source>
</evidence>
<evidence type="ECO:0000255" key="3"/>
<evidence type="ECO:0000256" key="4">
    <source>
        <dbReference type="SAM" id="MobiDB-lite"/>
    </source>
</evidence>
<evidence type="ECO:0000305" key="5"/>
<evidence type="ECO:0007744" key="6">
    <source>
    </source>
</evidence>
<evidence type="ECO:0007744" key="7">
    <source>
    </source>
</evidence>
<evidence type="ECO:0007744" key="8">
    <source>
    </source>
</evidence>
<feature type="chain" id="PRO_0000218294" description="DNA repair protein complementing XP-C cells homolog">
    <location>
        <begin position="1"/>
        <end position="930"/>
    </location>
</feature>
<feature type="region of interest" description="Disordered" evidence="4">
    <location>
        <begin position="1"/>
        <end position="134"/>
    </location>
</feature>
<feature type="region of interest" description="Disordered" evidence="4">
    <location>
        <begin position="323"/>
        <end position="517"/>
    </location>
</feature>
<feature type="region of interest" description="Interaction with RAD23B" evidence="1">
    <location>
        <begin position="489"/>
        <end position="727"/>
    </location>
</feature>
<feature type="region of interest" description="Minimal sensor domain involved in damage recognition" evidence="1">
    <location>
        <begin position="600"/>
        <end position="759"/>
    </location>
</feature>
<feature type="region of interest" description="DNA-binding; preference for heteroduplex DNA" evidence="1">
    <location>
        <begin position="600"/>
        <end position="734"/>
    </location>
</feature>
<feature type="region of interest" description="DNA-binding; preference for single stranded DNA; required for formation of stable nucleoprotein complex" evidence="1">
    <location>
        <begin position="760"/>
        <end position="824"/>
    </location>
</feature>
<feature type="region of interest" description="Interaction with ERCC2 and GTF2H1" evidence="1">
    <location>
        <begin position="809"/>
        <end position="930"/>
    </location>
</feature>
<feature type="region of interest" description="Interaction with CETN2" evidence="1">
    <location>
        <begin position="840"/>
        <end position="859"/>
    </location>
</feature>
<feature type="region of interest" description="Disordered" evidence="4">
    <location>
        <begin position="867"/>
        <end position="930"/>
    </location>
</feature>
<feature type="short sequence motif" description="Nuclear localization signal" evidence="3">
    <location>
        <begin position="388"/>
        <end position="393"/>
    </location>
</feature>
<feature type="compositionally biased region" description="Basic and acidic residues" evidence="4">
    <location>
        <begin position="16"/>
        <end position="29"/>
    </location>
</feature>
<feature type="compositionally biased region" description="Basic residues" evidence="4">
    <location>
        <begin position="40"/>
        <end position="57"/>
    </location>
</feature>
<feature type="compositionally biased region" description="Basic and acidic residues" evidence="4">
    <location>
        <begin position="86"/>
        <end position="106"/>
    </location>
</feature>
<feature type="compositionally biased region" description="Acidic residues" evidence="4">
    <location>
        <begin position="120"/>
        <end position="134"/>
    </location>
</feature>
<feature type="compositionally biased region" description="Low complexity" evidence="4">
    <location>
        <begin position="342"/>
        <end position="351"/>
    </location>
</feature>
<feature type="compositionally biased region" description="Basic and acidic residues" evidence="4">
    <location>
        <begin position="361"/>
        <end position="373"/>
    </location>
</feature>
<feature type="compositionally biased region" description="Basic residues" evidence="4">
    <location>
        <begin position="408"/>
        <end position="418"/>
    </location>
</feature>
<feature type="compositionally biased region" description="Polar residues" evidence="4">
    <location>
        <begin position="466"/>
        <end position="485"/>
    </location>
</feature>
<feature type="compositionally biased region" description="Low complexity" evidence="4">
    <location>
        <begin position="486"/>
        <end position="500"/>
    </location>
</feature>
<feature type="compositionally biased region" description="Basic and acidic residues" evidence="4">
    <location>
        <begin position="899"/>
        <end position="911"/>
    </location>
</feature>
<feature type="modified residue" description="Phosphoserine" evidence="8">
    <location>
        <position position="93"/>
    </location>
</feature>
<feature type="modified residue" description="Phosphoserine" evidence="2">
    <location>
        <position position="126"/>
    </location>
</feature>
<feature type="modified residue" description="Phosphothreonine" evidence="2">
    <location>
        <position position="165"/>
    </location>
</feature>
<feature type="modified residue" description="Phosphoserine" evidence="2">
    <location>
        <position position="395"/>
    </location>
</feature>
<feature type="modified residue" description="Phosphoserine" evidence="2">
    <location>
        <position position="397"/>
    </location>
</feature>
<feature type="modified residue" description="Phosphoserine" evidence="6 7 8">
    <location>
        <position position="875"/>
    </location>
</feature>
<feature type="modified residue" description="Phosphoserine" evidence="6 7 8">
    <location>
        <position position="876"/>
    </location>
</feature>
<feature type="modified residue" description="Phosphoserine" evidence="2">
    <location>
        <position position="883"/>
    </location>
</feature>
<feature type="modified residue" description="Phosphoserine" evidence="2">
    <location>
        <position position="895"/>
    </location>
</feature>
<feature type="cross-link" description="Glycyl lysine isopeptide (Lys-Gly) (interchain with G-Cter in SUMO2)" evidence="2">
    <location>
        <position position="40"/>
    </location>
</feature>
<feature type="cross-link" description="Glycyl lysine isopeptide (Lys-Gly) (interchain with G-Cter in SUMO2)" evidence="2">
    <location>
        <position position="80"/>
    </location>
</feature>
<feature type="cross-link" description="Glycyl lysine isopeptide (Lys-Gly) (interchain with G-Cter in SUMO2)" evidence="2">
    <location>
        <position position="88"/>
    </location>
</feature>
<feature type="cross-link" description="Glycyl lysine isopeptide (Lys-Gly) (interchain with G-Cter in SUMO2)" evidence="2">
    <location>
        <position position="157"/>
    </location>
</feature>
<feature type="sequence conflict" description="In Ref. 2; BAB64540." evidence="5" ref="2">
    <original>K</original>
    <variation>N</variation>
    <location>
        <position position="13"/>
    </location>
</feature>
<feature type="sequence conflict" description="In Ref. 1; AAC52500." evidence="5" ref="1">
    <original>L</original>
    <variation>S</variation>
    <location>
        <position position="84"/>
    </location>
</feature>
<feature type="sequence conflict" description="In Ref. 1; AAC52500." evidence="5" ref="1">
    <original>F</original>
    <variation>L</variation>
    <location>
        <position position="98"/>
    </location>
</feature>
<feature type="sequence conflict" description="In Ref. 1; AAC52500." evidence="5" ref="1">
    <original>S</original>
    <variation>L</variation>
    <location>
        <position position="101"/>
    </location>
</feature>
<feature type="sequence conflict" description="In Ref. 2; BAB64540." evidence="5" ref="2">
    <original>AT</original>
    <variation>CP</variation>
    <location>
        <begin position="148"/>
        <end position="149"/>
    </location>
</feature>
<feature type="sequence conflict" description="In Ref. 1; AAC52500." evidence="5" ref="1">
    <original>TP</original>
    <variation>RG</variation>
    <location>
        <begin position="165"/>
        <end position="166"/>
    </location>
</feature>
<feature type="sequence conflict" description="In Ref. 4; AAA82720." evidence="5" ref="4">
    <original>EVQENM</original>
    <variation>GVHEDT</variation>
    <location>
        <begin position="196"/>
        <end position="201"/>
    </location>
</feature>
<feature type="sequence conflict" description="In Ref. 4; AAA82720." evidence="5" ref="4">
    <original>S</original>
    <variation>N</variation>
    <location>
        <position position="212"/>
    </location>
</feature>
<feature type="sequence conflict" description="In Ref. 4; AAA82720." evidence="5" ref="4">
    <original>S</original>
    <variation>N</variation>
    <location>
        <position position="218"/>
    </location>
</feature>
<feature type="sequence conflict" description="In Ref. 4; AAA82720." evidence="5" ref="4">
    <original>RQP</original>
    <variation>SQL</variation>
    <location>
        <begin position="221"/>
        <end position="223"/>
    </location>
</feature>
<feature type="sequence conflict" description="In Ref. 4; AAA82720." evidence="5" ref="4">
    <original>GKA</original>
    <variation>AKP</variation>
    <location>
        <begin position="373"/>
        <end position="375"/>
    </location>
</feature>
<feature type="sequence conflict" description="In Ref. 1; AAC52500." evidence="5" ref="1">
    <original>G</original>
    <variation>GS</variation>
    <location>
        <position position="373"/>
    </location>
</feature>
<feature type="sequence conflict" description="In Ref. 1; AAC52500." evidence="5" ref="1">
    <original>S</original>
    <variation>R</variation>
    <location>
        <position position="397"/>
    </location>
</feature>
<feature type="sequence conflict" description="In Ref. 2; BAB64540." evidence="5" ref="2">
    <original>E</original>
    <variation>K</variation>
    <location>
        <position position="454"/>
    </location>
</feature>
<feature type="sequence conflict" description="In Ref. 4; AAA82720." evidence="5" ref="4">
    <original>R</original>
    <variation>C</variation>
    <location>
        <position position="458"/>
    </location>
</feature>
<feature type="sequence conflict" description="In Ref. 1; AAC52500." evidence="5" ref="1">
    <original>S</original>
    <variation>C</variation>
    <location>
        <position position="497"/>
    </location>
</feature>
<feature type="sequence conflict" description="In Ref. 1; AAC52500." evidence="5" ref="1">
    <original>E</original>
    <variation>K</variation>
    <location>
        <position position="614"/>
    </location>
</feature>
<feature type="sequence conflict" description="In Ref. 1; AAC52500." evidence="5" ref="1">
    <original>KH</original>
    <variation>ND</variation>
    <location>
        <begin position="621"/>
        <end position="622"/>
    </location>
</feature>
<feature type="sequence conflict" description="In Ref. 1; AAC52500." evidence="5" ref="1">
    <original>W</original>
    <variation>R</variation>
    <location>
        <position position="683"/>
    </location>
</feature>
<feature type="sequence conflict" description="In Ref. 1; AAC52500." evidence="5" ref="1">
    <original>LSEP</original>
    <variation>HLGA</variation>
    <location>
        <begin position="712"/>
        <end position="715"/>
    </location>
</feature>
<feature type="sequence conflict" description="In Ref. 1; AAC52500." evidence="5" ref="1">
    <original>N</original>
    <variation>K</variation>
    <location>
        <position position="751"/>
    </location>
</feature>
<feature type="sequence conflict" description="In Ref. 1; AAC52500." evidence="5" ref="1">
    <original>R</original>
    <variation>H</variation>
    <location>
        <position position="777"/>
    </location>
</feature>
<feature type="sequence conflict" description="In Ref. 1; AAC52500." evidence="5" ref="1">
    <original>C</original>
    <variation>S</variation>
    <location>
        <position position="797"/>
    </location>
</feature>
<feature type="sequence conflict" description="In Ref. 1; AAC52500." evidence="5" ref="1">
    <original>A</original>
    <variation>P</variation>
    <location>
        <position position="921"/>
    </location>
</feature>
<protein>
    <recommendedName>
        <fullName>DNA repair protein complementing XP-C cells homolog</fullName>
    </recommendedName>
    <alternativeName>
        <fullName>Xeroderma pigmentosum group C-complementing protein homolog</fullName>
    </alternativeName>
    <alternativeName>
        <fullName>p125</fullName>
    </alternativeName>
</protein>
<gene>
    <name type="primary">Xpc</name>
</gene>
<comment type="function">
    <text evidence="2">Involved in global genome nucleotide excision repair (GG-NER) by acting as damage sensing and DNA-binding factor component of the XPC complex. Has only a low DNA repair activity by itself which is stimulated by RAD23B and RAD23A. Has a preference to bind DNA containing a short single-stranded segment but not to damaged oligonucleotides. This feature is proposed to be related to a dynamic sensor function: XPC can rapidly screen duplex DNA for non-hydrogen-bonded bases by forming a transient nucleoprotein intermediate complex which matures into a stable recognition complex through an intrinsic single-stranded DNA-binding activity. The XPC complex is proposed to represent the first factor bound at the sites of DNA damage and together with other core recognition factors, XPA, RPA and the TFIIH complex, is part of the pre-incision (or initial recognition) complex. The XPC complex recognizes a wide spectrum of damaged DNA characterized by distortions of the DNA helix such as single-stranded loops, mismatched bubbles or single-stranded overhangs. The orientation of XPC complex binding appears to be crucial for inducing a productive NER. XPC complex is proposed to recognize and to interact with unpaired bases on the undamaged DNA strand which is followed by recruitment of the TFIIH complex and subsequent scanning for lesions in the opposite strand in a 5'-to-3' direction by the NER machinery. Cyclobutane pyrimidine dimers (CPDs) which are formed upon UV-induced DNA damage esacpe detection by the XPC complex due to a low degree of structural perurbation. Instead they are detected by the UV-DDB complex which in turn recruits and cooperates with the XPC complex in the respective DNA repair. In vitro, the XPC:RAD23B dimer is sufficient to initiate NER; it preferentially binds to cisplatin and UV-damaged double-stranded DNA and also binds to a variety of chemically and structurally diverse DNA adducts. XPC:RAD23B contacts DNA both 5' and 3' of a cisplatin lesion with a preference for the 5' side. XPC:RAD23B induces a bend in DNA upon binding. XPC:RAD23B stimulates the activity of DNA glycosylases TDG and SMUG1.</text>
</comment>
<comment type="function">
    <text evidence="2">In absence of DNA repair, the XPC complex also acts as a transcription coactivator: XPC interacts with the DNA-binding transcription factor E2F1 at a subset of promoters to recruit KAT2A and histone acetyltransferase complexes (HAT). KAT2A recruitment specifically promotes acetylation of histone variant H2A.Z.1/H2A.Z, but not H2A.Z.2/H2A.V, thereby promoting expression of target genes.</text>
</comment>
<comment type="subunit">
    <text evidence="2">Component of the XPC complex composed of XPC, RAD23B and CETN2. Interacts with RAD23A; the interaction is suggesting the existence of a functional equivalent variant XPC complex. Interacts with TDG; the interaction is demonstrated using the XPC:RAD23B dimer. Interacts with SMUG1; the interaction is demonstrated using the XPC:RAD23B dimer. Interacts with DDB2. Interacts with CCNH, GTF2H1 and ERCC3. Interacts with E2F1 and KAT2A; leading to KAT2A recruitment to promoters and subsequent acetylation of histones.</text>
</comment>
<comment type="subcellular location">
    <subcellularLocation>
        <location evidence="2">Nucleus</location>
    </subcellularLocation>
    <subcellularLocation>
        <location evidence="2">Chromosome</location>
    </subcellularLocation>
    <subcellularLocation>
        <location evidence="2">Cytoplasm</location>
    </subcellularLocation>
    <text evidence="2">Omnipresent in the nucleus and consistently associates with and dissociates from DNA in the absence of DNA damage. Continuously shuttles between the cytoplasm and the nucleus, which is impeded by the presence of NER lesions.</text>
</comment>
<comment type="PTM">
    <text evidence="2">Ubiquitinated upon UV irradiation; the ubiquitination requires the UV-DDB complex, appears to be reversible and does not serve as a signal for degradation. Ubiquitinated by RNF11 via 'Lys-63'-linked ubiquitination. Ubiquitination by RNF111 is polysumoylation-dependent and promotes nucleotide excision repair.</text>
</comment>
<comment type="PTM">
    <text evidence="2">Sumoylated; sumoylation promotes ubiquitination by RNF111.</text>
</comment>
<comment type="similarity">
    <text evidence="5">Belongs to the XPC family.</text>
</comment>
<comment type="sequence caution" evidence="5">
    <conflict type="frameshift">
        <sequence resource="EMBL-CDS" id="AAC52500"/>
    </conflict>
</comment>
<name>XPC_MOUSE</name>
<sequence length="930" mass="104522">MAPKRTADGRRRKRGQKTEDNKVARHEESVADDFEDEKQKPRRKSSFPKVSQGKRKRGCSDPGDPTNGAAKKKVAKATAKSKNLKVLKEEALSDGDDFRDSPADCKKAKKHPKSKVVDQGTDEDDSEDDWEEVEELTEPVLDMGENSATSPSDMPVKAVEIEIETPQQAKERERSEKIKMEFETYLRRMMKRFNKEVQENMHKVHLLCLLASGFYRNSICRQPDLLAIGLSIIPIRFTKVPLQDRDAYYLSNLVKWFIGTFTVNADLSASEQDDLQTTLERRIAIYSARDNEELVHIFLLILRALQLLTRLVLSLQPIPLKSAVTKGRKSSKETSVEGPGGSSELSSNSPESHNKPTTSRRIKEEETLSEGRGKATARGKRGTGTAGSRQRRKPSCSEGEEAEQKVQGRPHARKRRVAAKVSYKEESESDGAGSGSDFEPSSGEGQHSSDEDCEPGPRKQKRASAPQRTKAGSKSASKTQRGSQCEPSSFPEASSSSSGCKRGKKVSSGAEEMADRKPAGVDQWLEVYCEPQAKWVCVDCVHGVVGQPVACYKYATKPMTYVVGIDSDGWVRDVTQRYDPAWMTATRKCRVDAEWWAETLRPYRSLLTEREKKEDQEFQAKHLDQPLPTSISTYKNHPLYALKRHLLKFQAIYPETAAVLGYCRGEAVYSRDCVHTLHSRDTWLKQARVVRLGEVPYKMVKGFSNRARKARLSEPQLHDHNDLGLYGHWQTEEYQPPIAVDGKVPRNEFGNVYLFLPSMMPVGCVQMTLPNLNRVARKLGIDCVQAITGFDFHGGYCHPVTDGYIVCEEFRDVLLAAWENEQAIIEKKEKEKKEKRALGNWKLLVRGLLIRERLKLRYGAKSEAAAPHAAGGGLSSDEEEGTSSQAEAARVLAASWPQNREDPEQKSEYTKMTRKRRAAEASHLFPFEKL</sequence>
<reference key="1">
    <citation type="journal article" date="1996" name="Nucleic Acids Res.">
        <title>Sequence of the mouse XPC cDNA and genomic structure of the human XPC gene.</title>
        <authorList>
            <person name="Li L."/>
            <person name="Peterson C."/>
            <person name="Legerski R."/>
        </authorList>
    </citation>
    <scope>NUCLEOTIDE SEQUENCE [MRNA] OF 3-930</scope>
</reference>
<reference key="2">
    <citation type="submission" date="2001-09" db="EMBL/GenBank/DDBJ databases">
        <title>Molecular cloning of mouse XPC.</title>
        <authorList>
            <person name="Yokoi M."/>
            <person name="Hanaoka F."/>
        </authorList>
    </citation>
    <scope>NUCLEOTIDE SEQUENCE [MRNA]</scope>
</reference>
<reference key="3">
    <citation type="journal article" date="2005" name="Science">
        <title>The transcriptional landscape of the mammalian genome.</title>
        <authorList>
            <person name="Carninci P."/>
            <person name="Kasukawa T."/>
            <person name="Katayama S."/>
            <person name="Gough J."/>
            <person name="Frith M.C."/>
            <person name="Maeda N."/>
            <person name="Oyama R."/>
            <person name="Ravasi T."/>
            <person name="Lenhard B."/>
            <person name="Wells C."/>
            <person name="Kodzius R."/>
            <person name="Shimokawa K."/>
            <person name="Bajic V.B."/>
            <person name="Brenner S.E."/>
            <person name="Batalov S."/>
            <person name="Forrest A.R."/>
            <person name="Zavolan M."/>
            <person name="Davis M.J."/>
            <person name="Wilming L.G."/>
            <person name="Aidinis V."/>
            <person name="Allen J.E."/>
            <person name="Ambesi-Impiombato A."/>
            <person name="Apweiler R."/>
            <person name="Aturaliya R.N."/>
            <person name="Bailey T.L."/>
            <person name="Bansal M."/>
            <person name="Baxter L."/>
            <person name="Beisel K.W."/>
            <person name="Bersano T."/>
            <person name="Bono H."/>
            <person name="Chalk A.M."/>
            <person name="Chiu K.P."/>
            <person name="Choudhary V."/>
            <person name="Christoffels A."/>
            <person name="Clutterbuck D.R."/>
            <person name="Crowe M.L."/>
            <person name="Dalla E."/>
            <person name="Dalrymple B.P."/>
            <person name="de Bono B."/>
            <person name="Della Gatta G."/>
            <person name="di Bernardo D."/>
            <person name="Down T."/>
            <person name="Engstrom P."/>
            <person name="Fagiolini M."/>
            <person name="Faulkner G."/>
            <person name="Fletcher C.F."/>
            <person name="Fukushima T."/>
            <person name="Furuno M."/>
            <person name="Futaki S."/>
            <person name="Gariboldi M."/>
            <person name="Georgii-Hemming P."/>
            <person name="Gingeras T.R."/>
            <person name="Gojobori T."/>
            <person name="Green R.E."/>
            <person name="Gustincich S."/>
            <person name="Harbers M."/>
            <person name="Hayashi Y."/>
            <person name="Hensch T.K."/>
            <person name="Hirokawa N."/>
            <person name="Hill D."/>
            <person name="Huminiecki L."/>
            <person name="Iacono M."/>
            <person name="Ikeo K."/>
            <person name="Iwama A."/>
            <person name="Ishikawa T."/>
            <person name="Jakt M."/>
            <person name="Kanapin A."/>
            <person name="Katoh M."/>
            <person name="Kawasawa Y."/>
            <person name="Kelso J."/>
            <person name="Kitamura H."/>
            <person name="Kitano H."/>
            <person name="Kollias G."/>
            <person name="Krishnan S.P."/>
            <person name="Kruger A."/>
            <person name="Kummerfeld S.K."/>
            <person name="Kurochkin I.V."/>
            <person name="Lareau L.F."/>
            <person name="Lazarevic D."/>
            <person name="Lipovich L."/>
            <person name="Liu J."/>
            <person name="Liuni S."/>
            <person name="McWilliam S."/>
            <person name="Madan Babu M."/>
            <person name="Madera M."/>
            <person name="Marchionni L."/>
            <person name="Matsuda H."/>
            <person name="Matsuzawa S."/>
            <person name="Miki H."/>
            <person name="Mignone F."/>
            <person name="Miyake S."/>
            <person name="Morris K."/>
            <person name="Mottagui-Tabar S."/>
            <person name="Mulder N."/>
            <person name="Nakano N."/>
            <person name="Nakauchi H."/>
            <person name="Ng P."/>
            <person name="Nilsson R."/>
            <person name="Nishiguchi S."/>
            <person name="Nishikawa S."/>
            <person name="Nori F."/>
            <person name="Ohara O."/>
            <person name="Okazaki Y."/>
            <person name="Orlando V."/>
            <person name="Pang K.C."/>
            <person name="Pavan W.J."/>
            <person name="Pavesi G."/>
            <person name="Pesole G."/>
            <person name="Petrovsky N."/>
            <person name="Piazza S."/>
            <person name="Reed J."/>
            <person name="Reid J.F."/>
            <person name="Ring B.Z."/>
            <person name="Ringwald M."/>
            <person name="Rost B."/>
            <person name="Ruan Y."/>
            <person name="Salzberg S.L."/>
            <person name="Sandelin A."/>
            <person name="Schneider C."/>
            <person name="Schoenbach C."/>
            <person name="Sekiguchi K."/>
            <person name="Semple C.A."/>
            <person name="Seno S."/>
            <person name="Sessa L."/>
            <person name="Sheng Y."/>
            <person name="Shibata Y."/>
            <person name="Shimada H."/>
            <person name="Shimada K."/>
            <person name="Silva D."/>
            <person name="Sinclair B."/>
            <person name="Sperling S."/>
            <person name="Stupka E."/>
            <person name="Sugiura K."/>
            <person name="Sultana R."/>
            <person name="Takenaka Y."/>
            <person name="Taki K."/>
            <person name="Tammoja K."/>
            <person name="Tan S.L."/>
            <person name="Tang S."/>
            <person name="Taylor M.S."/>
            <person name="Tegner J."/>
            <person name="Teichmann S.A."/>
            <person name="Ueda H.R."/>
            <person name="van Nimwegen E."/>
            <person name="Verardo R."/>
            <person name="Wei C.L."/>
            <person name="Yagi K."/>
            <person name="Yamanishi H."/>
            <person name="Zabarovsky E."/>
            <person name="Zhu S."/>
            <person name="Zimmer A."/>
            <person name="Hide W."/>
            <person name="Bult C."/>
            <person name="Grimmond S.M."/>
            <person name="Teasdale R.D."/>
            <person name="Liu E.T."/>
            <person name="Brusic V."/>
            <person name="Quackenbush J."/>
            <person name="Wahlestedt C."/>
            <person name="Mattick J.S."/>
            <person name="Hume D.A."/>
            <person name="Kai C."/>
            <person name="Sasaki D."/>
            <person name="Tomaru Y."/>
            <person name="Fukuda S."/>
            <person name="Kanamori-Katayama M."/>
            <person name="Suzuki M."/>
            <person name="Aoki J."/>
            <person name="Arakawa T."/>
            <person name="Iida J."/>
            <person name="Imamura K."/>
            <person name="Itoh M."/>
            <person name="Kato T."/>
            <person name="Kawaji H."/>
            <person name="Kawagashira N."/>
            <person name="Kawashima T."/>
            <person name="Kojima M."/>
            <person name="Kondo S."/>
            <person name="Konno H."/>
            <person name="Nakano K."/>
            <person name="Ninomiya N."/>
            <person name="Nishio T."/>
            <person name="Okada M."/>
            <person name="Plessy C."/>
            <person name="Shibata K."/>
            <person name="Shiraki T."/>
            <person name="Suzuki S."/>
            <person name="Tagami M."/>
            <person name="Waki K."/>
            <person name="Watahiki A."/>
            <person name="Okamura-Oho Y."/>
            <person name="Suzuki H."/>
            <person name="Kawai J."/>
            <person name="Hayashizaki Y."/>
        </authorList>
    </citation>
    <scope>NUCLEOTIDE SEQUENCE [LARGE SCALE MRNA]</scope>
    <source>
        <strain>C57BL/6J</strain>
        <tissue>Lung</tissue>
        <tissue>Skin</tissue>
    </source>
</reference>
<reference key="4">
    <citation type="journal article" date="1995" name="Nature">
        <title>High susceptibility to ultraviolet-induced carcinogenesis in mice lacking XPC.</title>
        <authorList>
            <person name="Sands A.T."/>
            <person name="Abuin A."/>
            <person name="Sanchez A."/>
            <person name="Conti C.J."/>
            <person name="Bradley A."/>
        </authorList>
    </citation>
    <scope>NUCLEOTIDE SEQUENCE [MRNA] OF 59-617</scope>
    <source>
        <strain>129/Sv</strain>
    </source>
</reference>
<reference key="5">
    <citation type="journal article" date="2007" name="Proc. Natl. Acad. Sci. U.S.A.">
        <title>Large-scale phosphorylation analysis of mouse liver.</title>
        <authorList>
            <person name="Villen J."/>
            <person name="Beausoleil S.A."/>
            <person name="Gerber S.A."/>
            <person name="Gygi S.P."/>
        </authorList>
    </citation>
    <scope>PHOSPHORYLATION [LARGE SCALE ANALYSIS] AT SER-875 AND SER-876</scope>
    <scope>IDENTIFICATION BY MASS SPECTROMETRY [LARGE SCALE ANALYSIS]</scope>
    <source>
        <tissue>Liver</tissue>
    </source>
</reference>
<reference key="6">
    <citation type="journal article" date="2009" name="Immunity">
        <title>The phagosomal proteome in interferon-gamma-activated macrophages.</title>
        <authorList>
            <person name="Trost M."/>
            <person name="English L."/>
            <person name="Lemieux S."/>
            <person name="Courcelles M."/>
            <person name="Desjardins M."/>
            <person name="Thibault P."/>
        </authorList>
    </citation>
    <scope>PHOSPHORYLATION [LARGE SCALE ANALYSIS] AT SER-875 AND SER-876</scope>
    <scope>IDENTIFICATION BY MASS SPECTROMETRY [LARGE SCALE ANALYSIS]</scope>
</reference>
<reference key="7">
    <citation type="journal article" date="2010" name="Cell">
        <title>A tissue-specific atlas of mouse protein phosphorylation and expression.</title>
        <authorList>
            <person name="Huttlin E.L."/>
            <person name="Jedrychowski M.P."/>
            <person name="Elias J.E."/>
            <person name="Goswami T."/>
            <person name="Rad R."/>
            <person name="Beausoleil S.A."/>
            <person name="Villen J."/>
            <person name="Haas W."/>
            <person name="Sowa M.E."/>
            <person name="Gygi S.P."/>
        </authorList>
    </citation>
    <scope>PHOSPHORYLATION [LARGE SCALE ANALYSIS] AT SER-93; SER-875 AND SER-876</scope>
    <scope>IDENTIFICATION BY MASS SPECTROMETRY [LARGE SCALE ANALYSIS]</scope>
    <source>
        <tissue>Brain</tissue>
        <tissue>Brown adipose tissue</tissue>
        <tissue>Kidney</tissue>
        <tissue>Liver</tissue>
        <tissue>Lung</tissue>
        <tissue>Pancreas</tissue>
        <tissue>Spleen</tissue>
        <tissue>Testis</tissue>
    </source>
</reference>
<dbReference type="EMBL" id="U27398">
    <property type="protein sequence ID" value="AAC52500.1"/>
    <property type="status" value="ALT_FRAME"/>
    <property type="molecule type" value="mRNA"/>
</dbReference>
<dbReference type="EMBL" id="AB071144">
    <property type="protein sequence ID" value="BAB64540.1"/>
    <property type="molecule type" value="mRNA"/>
</dbReference>
<dbReference type="EMBL" id="AK004713">
    <property type="protein sequence ID" value="BAB23497.1"/>
    <property type="molecule type" value="mRNA"/>
</dbReference>
<dbReference type="EMBL" id="AK028595">
    <property type="protein sequence ID" value="BAC26023.1"/>
    <property type="molecule type" value="mRNA"/>
</dbReference>
<dbReference type="EMBL" id="AK166981">
    <property type="protein sequence ID" value="BAE39163.1"/>
    <property type="molecule type" value="mRNA"/>
</dbReference>
<dbReference type="EMBL" id="U40005">
    <property type="protein sequence ID" value="AAA82720.1"/>
    <property type="molecule type" value="mRNA"/>
</dbReference>
<dbReference type="CCDS" id="CCDS39569.1"/>
<dbReference type="PIR" id="S70630">
    <property type="entry name" value="S70630"/>
</dbReference>
<dbReference type="RefSeq" id="NP_033557.2">
    <property type="nucleotide sequence ID" value="NM_009531.2"/>
</dbReference>
<dbReference type="SMR" id="P51612"/>
<dbReference type="BioGRID" id="204605">
    <property type="interactions" value="3"/>
</dbReference>
<dbReference type="FunCoup" id="P51612">
    <property type="interactions" value="4007"/>
</dbReference>
<dbReference type="IntAct" id="P51612">
    <property type="interactions" value="2"/>
</dbReference>
<dbReference type="STRING" id="10090.ENSMUSP00000032182"/>
<dbReference type="iPTMnet" id="P51612"/>
<dbReference type="PhosphoSitePlus" id="P51612"/>
<dbReference type="jPOST" id="P51612"/>
<dbReference type="PaxDb" id="10090-ENSMUSP00000032182"/>
<dbReference type="PeptideAtlas" id="P51612"/>
<dbReference type="ProteomicsDB" id="297654"/>
<dbReference type="Pumba" id="P51612"/>
<dbReference type="Antibodypedia" id="4092">
    <property type="antibodies" value="326 antibodies from 31 providers"/>
</dbReference>
<dbReference type="Ensembl" id="ENSMUST00000032182.5">
    <property type="protein sequence ID" value="ENSMUSP00000032182.4"/>
    <property type="gene ID" value="ENSMUSG00000030094.9"/>
</dbReference>
<dbReference type="GeneID" id="22591"/>
<dbReference type="KEGG" id="mmu:22591"/>
<dbReference type="UCSC" id="uc009cyd.2">
    <property type="organism name" value="mouse"/>
</dbReference>
<dbReference type="AGR" id="MGI:103557"/>
<dbReference type="CTD" id="7508"/>
<dbReference type="MGI" id="MGI:103557">
    <property type="gene designation" value="Xpc"/>
</dbReference>
<dbReference type="VEuPathDB" id="HostDB:ENSMUSG00000030094"/>
<dbReference type="eggNOG" id="KOG2179">
    <property type="taxonomic scope" value="Eukaryota"/>
</dbReference>
<dbReference type="GeneTree" id="ENSGT00390000005194"/>
<dbReference type="HOGENOM" id="CLU_009925_1_1_1"/>
<dbReference type="InParanoid" id="P51612"/>
<dbReference type="OMA" id="WVHIDAV"/>
<dbReference type="OrthoDB" id="300780at2759"/>
<dbReference type="PhylomeDB" id="P51612"/>
<dbReference type="TreeFam" id="TF101242"/>
<dbReference type="Reactome" id="R-MMU-3108214">
    <property type="pathway name" value="SUMOylation of DNA damage response and repair proteins"/>
</dbReference>
<dbReference type="Reactome" id="R-MMU-5696394">
    <property type="pathway name" value="DNA Damage Recognition in GG-NER"/>
</dbReference>
<dbReference type="Reactome" id="R-MMU-5696395">
    <property type="pathway name" value="Formation of Incision Complex in GG-NER"/>
</dbReference>
<dbReference type="BioGRID-ORCS" id="22591">
    <property type="hits" value="1 hit in 117 CRISPR screens"/>
</dbReference>
<dbReference type="ChiTaRS" id="Xpc">
    <property type="organism name" value="mouse"/>
</dbReference>
<dbReference type="PRO" id="PR:P51612"/>
<dbReference type="Proteomes" id="UP000000589">
    <property type="component" value="Chromosome 6"/>
</dbReference>
<dbReference type="RNAct" id="P51612">
    <property type="molecule type" value="protein"/>
</dbReference>
<dbReference type="Bgee" id="ENSMUSG00000030094">
    <property type="expression patterns" value="Expressed in granulocyte and 241 other cell types or tissues"/>
</dbReference>
<dbReference type="ExpressionAtlas" id="P51612">
    <property type="expression patterns" value="baseline and differential"/>
</dbReference>
<dbReference type="GO" id="GO:0005829">
    <property type="term" value="C:cytosol"/>
    <property type="evidence" value="ECO:0007669"/>
    <property type="project" value="Ensembl"/>
</dbReference>
<dbReference type="GO" id="GO:0005739">
    <property type="term" value="C:mitochondrion"/>
    <property type="evidence" value="ECO:0007669"/>
    <property type="project" value="Ensembl"/>
</dbReference>
<dbReference type="GO" id="GO:0005730">
    <property type="term" value="C:nucleolus"/>
    <property type="evidence" value="ECO:0007669"/>
    <property type="project" value="Ensembl"/>
</dbReference>
<dbReference type="GO" id="GO:0005654">
    <property type="term" value="C:nucleoplasm"/>
    <property type="evidence" value="ECO:0007669"/>
    <property type="project" value="Ensembl"/>
</dbReference>
<dbReference type="GO" id="GO:0000109">
    <property type="term" value="C:nucleotide-excision repair complex"/>
    <property type="evidence" value="ECO:0000250"/>
    <property type="project" value="UniProtKB"/>
</dbReference>
<dbReference type="GO" id="GO:0005634">
    <property type="term" value="C:nucleus"/>
    <property type="evidence" value="ECO:0000314"/>
    <property type="project" value="MGI"/>
</dbReference>
<dbReference type="GO" id="GO:0005886">
    <property type="term" value="C:plasma membrane"/>
    <property type="evidence" value="ECO:0007669"/>
    <property type="project" value="Ensembl"/>
</dbReference>
<dbReference type="GO" id="GO:0090734">
    <property type="term" value="C:site of DNA damage"/>
    <property type="evidence" value="ECO:0000314"/>
    <property type="project" value="MGI"/>
</dbReference>
<dbReference type="GO" id="GO:0071942">
    <property type="term" value="C:XPC complex"/>
    <property type="evidence" value="ECO:0000250"/>
    <property type="project" value="UniProtKB"/>
</dbReference>
<dbReference type="GO" id="GO:0003684">
    <property type="term" value="F:damaged DNA binding"/>
    <property type="evidence" value="ECO:0000314"/>
    <property type="project" value="MGI"/>
</dbReference>
<dbReference type="GO" id="GO:0140612">
    <property type="term" value="F:DNA damage sensor activity"/>
    <property type="evidence" value="ECO:0007669"/>
    <property type="project" value="Ensembl"/>
</dbReference>
<dbReference type="GO" id="GO:0044877">
    <property type="term" value="F:protein-containing complex binding"/>
    <property type="evidence" value="ECO:0000250"/>
    <property type="project" value="UniProtKB"/>
</dbReference>
<dbReference type="GO" id="GO:0061629">
    <property type="term" value="F:RNA polymerase II-specific DNA-binding transcription factor binding"/>
    <property type="evidence" value="ECO:0000314"/>
    <property type="project" value="MGI"/>
</dbReference>
<dbReference type="GO" id="GO:0003697">
    <property type="term" value="F:single-stranded DNA binding"/>
    <property type="evidence" value="ECO:0007669"/>
    <property type="project" value="Ensembl"/>
</dbReference>
<dbReference type="GO" id="GO:0003713">
    <property type="term" value="F:transcription coactivator activity"/>
    <property type="evidence" value="ECO:0000250"/>
    <property type="project" value="UniProtKB"/>
</dbReference>
<dbReference type="GO" id="GO:0006974">
    <property type="term" value="P:DNA damage response"/>
    <property type="evidence" value="ECO:0000315"/>
    <property type="project" value="MGI"/>
</dbReference>
<dbReference type="GO" id="GO:0006281">
    <property type="term" value="P:DNA repair"/>
    <property type="evidence" value="ECO:0000315"/>
    <property type="project" value="MGI"/>
</dbReference>
<dbReference type="GO" id="GO:0031573">
    <property type="term" value="P:mitotic intra-S DNA damage checkpoint signaling"/>
    <property type="evidence" value="ECO:0000316"/>
    <property type="project" value="MGI"/>
</dbReference>
<dbReference type="GO" id="GO:0045721">
    <property type="term" value="P:negative regulation of gluconeogenesis"/>
    <property type="evidence" value="ECO:0000250"/>
    <property type="project" value="UniProtKB"/>
</dbReference>
<dbReference type="GO" id="GO:0006289">
    <property type="term" value="P:nucleotide-excision repair"/>
    <property type="evidence" value="ECO:0000314"/>
    <property type="project" value="MGI"/>
</dbReference>
<dbReference type="GO" id="GO:0045893">
    <property type="term" value="P:positive regulation of DNA-templated transcription"/>
    <property type="evidence" value="ECO:0000250"/>
    <property type="project" value="UniProtKB"/>
</dbReference>
<dbReference type="GO" id="GO:0000720">
    <property type="term" value="P:pyrimidine dimer repair by nucleotide-excision repair"/>
    <property type="evidence" value="ECO:0000315"/>
    <property type="project" value="MGI"/>
</dbReference>
<dbReference type="GO" id="GO:1901990">
    <property type="term" value="P:regulation of mitotic cell cycle phase transition"/>
    <property type="evidence" value="ECO:0007669"/>
    <property type="project" value="Ensembl"/>
</dbReference>
<dbReference type="GO" id="GO:0010996">
    <property type="term" value="P:response to auditory stimulus"/>
    <property type="evidence" value="ECO:0007669"/>
    <property type="project" value="Ensembl"/>
</dbReference>
<dbReference type="GO" id="GO:0010224">
    <property type="term" value="P:response to UV-B"/>
    <property type="evidence" value="ECO:0000315"/>
    <property type="project" value="MGI"/>
</dbReference>
<dbReference type="GO" id="GO:0009410">
    <property type="term" value="P:response to xenobiotic stimulus"/>
    <property type="evidence" value="ECO:0007669"/>
    <property type="project" value="Ensembl"/>
</dbReference>
<dbReference type="GO" id="GO:0070914">
    <property type="term" value="P:UV-damage excision repair"/>
    <property type="evidence" value="ECO:0000314"/>
    <property type="project" value="MGI"/>
</dbReference>
<dbReference type="FunFam" id="2.20.20.110:FF:000001">
    <property type="entry name" value="DNA repair protein complementing XP-C cells"/>
    <property type="match status" value="1"/>
</dbReference>
<dbReference type="FunFam" id="3.90.260.10:FF:000025">
    <property type="entry name" value="DNA repair protein complementing XP-C cells homolog"/>
    <property type="match status" value="1"/>
</dbReference>
<dbReference type="FunFam" id="3.30.70.2460:FF:000001">
    <property type="entry name" value="DNA repair protein Rad4 family"/>
    <property type="match status" value="1"/>
</dbReference>
<dbReference type="FunFam" id="3.90.260.10:FF:000003">
    <property type="entry name" value="XPC complex subunit, DNA damage recognition and repair factor"/>
    <property type="match status" value="1"/>
</dbReference>
<dbReference type="Gene3D" id="2.20.20.110">
    <property type="entry name" value="Rad4, beta-hairpin domain BHD1"/>
    <property type="match status" value="1"/>
</dbReference>
<dbReference type="Gene3D" id="3.30.70.2460">
    <property type="entry name" value="Rad4, beta-hairpin domain BHD3"/>
    <property type="match status" value="1"/>
</dbReference>
<dbReference type="Gene3D" id="3.90.260.10">
    <property type="entry name" value="Transglutaminase-like"/>
    <property type="match status" value="2"/>
</dbReference>
<dbReference type="InterPro" id="IPR018327">
    <property type="entry name" value="BHD_2"/>
</dbReference>
<dbReference type="InterPro" id="IPR004583">
    <property type="entry name" value="DNA_repair_Rad4"/>
</dbReference>
<dbReference type="InterPro" id="IPR018026">
    <property type="entry name" value="DNA_repair_Rad4-like"/>
</dbReference>
<dbReference type="InterPro" id="IPR038765">
    <property type="entry name" value="Papain-like_cys_pep_sf"/>
</dbReference>
<dbReference type="InterPro" id="IPR018325">
    <property type="entry name" value="Rad4/PNGase_transGLS-fold"/>
</dbReference>
<dbReference type="InterPro" id="IPR018326">
    <property type="entry name" value="Rad4_beta-hairpin_dom1"/>
</dbReference>
<dbReference type="InterPro" id="IPR018328">
    <property type="entry name" value="Rad4_beta-hairpin_dom3"/>
</dbReference>
<dbReference type="InterPro" id="IPR042488">
    <property type="entry name" value="Rad4_BHD3_sf"/>
</dbReference>
<dbReference type="InterPro" id="IPR036985">
    <property type="entry name" value="Transglutaminase-like_sf"/>
</dbReference>
<dbReference type="NCBIfam" id="TIGR00605">
    <property type="entry name" value="rad4"/>
    <property type="match status" value="1"/>
</dbReference>
<dbReference type="PANTHER" id="PTHR12135:SF0">
    <property type="entry name" value="DNA REPAIR PROTEIN COMPLEMENTING XP-C CELLS"/>
    <property type="match status" value="1"/>
</dbReference>
<dbReference type="PANTHER" id="PTHR12135">
    <property type="entry name" value="DNA REPAIR PROTEIN XP-C / RAD4"/>
    <property type="match status" value="1"/>
</dbReference>
<dbReference type="Pfam" id="PF10403">
    <property type="entry name" value="BHD_1"/>
    <property type="match status" value="1"/>
</dbReference>
<dbReference type="Pfam" id="PF10404">
    <property type="entry name" value="BHD_2"/>
    <property type="match status" value="1"/>
</dbReference>
<dbReference type="Pfam" id="PF10405">
    <property type="entry name" value="BHD_3"/>
    <property type="match status" value="1"/>
</dbReference>
<dbReference type="Pfam" id="PF03835">
    <property type="entry name" value="Rad4"/>
    <property type="match status" value="1"/>
</dbReference>
<dbReference type="SMART" id="SM01030">
    <property type="entry name" value="BHD_1"/>
    <property type="match status" value="1"/>
</dbReference>
<dbReference type="SMART" id="SM01031">
    <property type="entry name" value="BHD_2"/>
    <property type="match status" value="1"/>
</dbReference>
<dbReference type="SMART" id="SM01032">
    <property type="entry name" value="BHD_3"/>
    <property type="match status" value="1"/>
</dbReference>
<dbReference type="SUPFAM" id="SSF54001">
    <property type="entry name" value="Cysteine proteinases"/>
    <property type="match status" value="1"/>
</dbReference>
<keyword id="KW-0158">Chromosome</keyword>
<keyword id="KW-0963">Cytoplasm</keyword>
<keyword id="KW-0227">DNA damage</keyword>
<keyword id="KW-0234">DNA repair</keyword>
<keyword id="KW-0238">DNA-binding</keyword>
<keyword id="KW-1017">Isopeptide bond</keyword>
<keyword id="KW-0539">Nucleus</keyword>
<keyword id="KW-0597">Phosphoprotein</keyword>
<keyword id="KW-1185">Reference proteome</keyword>
<keyword id="KW-0804">Transcription</keyword>
<keyword id="KW-0805">Transcription regulation</keyword>
<keyword id="KW-0832">Ubl conjugation</keyword>
<organism>
    <name type="scientific">Mus musculus</name>
    <name type="common">Mouse</name>
    <dbReference type="NCBI Taxonomy" id="10090"/>
    <lineage>
        <taxon>Eukaryota</taxon>
        <taxon>Metazoa</taxon>
        <taxon>Chordata</taxon>
        <taxon>Craniata</taxon>
        <taxon>Vertebrata</taxon>
        <taxon>Euteleostomi</taxon>
        <taxon>Mammalia</taxon>
        <taxon>Eutheria</taxon>
        <taxon>Euarchontoglires</taxon>
        <taxon>Glires</taxon>
        <taxon>Rodentia</taxon>
        <taxon>Myomorpha</taxon>
        <taxon>Muroidea</taxon>
        <taxon>Muridae</taxon>
        <taxon>Murinae</taxon>
        <taxon>Mus</taxon>
        <taxon>Mus</taxon>
    </lineage>
</organism>
<proteinExistence type="evidence at protein level"/>